<name>GCH1_CAMC5</name>
<feature type="chain" id="PRO_1000058670" description="GTP cyclohydrolase 1">
    <location>
        <begin position="1"/>
        <end position="190"/>
    </location>
</feature>
<feature type="binding site" evidence="2">
    <location>
        <position position="75"/>
    </location>
    <ligand>
        <name>Zn(2+)</name>
        <dbReference type="ChEBI" id="CHEBI:29105"/>
    </ligand>
</feature>
<feature type="binding site" evidence="2">
    <location>
        <position position="78"/>
    </location>
    <ligand>
        <name>Zn(2+)</name>
        <dbReference type="ChEBI" id="CHEBI:29105"/>
    </ligand>
</feature>
<feature type="binding site" evidence="2">
    <location>
        <position position="146"/>
    </location>
    <ligand>
        <name>Zn(2+)</name>
        <dbReference type="ChEBI" id="CHEBI:29105"/>
    </ligand>
</feature>
<proteinExistence type="inferred from homology"/>
<accession>A7GW42</accession>
<keyword id="KW-0342">GTP-binding</keyword>
<keyword id="KW-0378">Hydrolase</keyword>
<keyword id="KW-0479">Metal-binding</keyword>
<keyword id="KW-0547">Nucleotide-binding</keyword>
<keyword id="KW-0554">One-carbon metabolism</keyword>
<keyword id="KW-1185">Reference proteome</keyword>
<keyword id="KW-0862">Zinc</keyword>
<dbReference type="EC" id="3.5.4.16" evidence="2"/>
<dbReference type="EMBL" id="CP000767">
    <property type="protein sequence ID" value="EAU00570.1"/>
    <property type="molecule type" value="Genomic_DNA"/>
</dbReference>
<dbReference type="RefSeq" id="WP_011991707.1">
    <property type="nucleotide sequence ID" value="NC_009715.2"/>
</dbReference>
<dbReference type="SMR" id="A7GW42"/>
<dbReference type="STRING" id="360105.CCV52592_1496"/>
<dbReference type="KEGG" id="ccv:CCV52592_1496"/>
<dbReference type="HOGENOM" id="CLU_049768_3_1_7"/>
<dbReference type="OrthoDB" id="9801207at2"/>
<dbReference type="UniPathway" id="UPA00848">
    <property type="reaction ID" value="UER00151"/>
</dbReference>
<dbReference type="Proteomes" id="UP000006380">
    <property type="component" value="Chromosome"/>
</dbReference>
<dbReference type="GO" id="GO:0005737">
    <property type="term" value="C:cytoplasm"/>
    <property type="evidence" value="ECO:0007669"/>
    <property type="project" value="TreeGrafter"/>
</dbReference>
<dbReference type="GO" id="GO:0005525">
    <property type="term" value="F:GTP binding"/>
    <property type="evidence" value="ECO:0007669"/>
    <property type="project" value="UniProtKB-KW"/>
</dbReference>
<dbReference type="GO" id="GO:0003934">
    <property type="term" value="F:GTP cyclohydrolase I activity"/>
    <property type="evidence" value="ECO:0007669"/>
    <property type="project" value="UniProtKB-UniRule"/>
</dbReference>
<dbReference type="GO" id="GO:0008270">
    <property type="term" value="F:zinc ion binding"/>
    <property type="evidence" value="ECO:0007669"/>
    <property type="project" value="UniProtKB-UniRule"/>
</dbReference>
<dbReference type="GO" id="GO:0006730">
    <property type="term" value="P:one-carbon metabolic process"/>
    <property type="evidence" value="ECO:0007669"/>
    <property type="project" value="UniProtKB-UniRule"/>
</dbReference>
<dbReference type="GO" id="GO:0006729">
    <property type="term" value="P:tetrahydrobiopterin biosynthetic process"/>
    <property type="evidence" value="ECO:0007669"/>
    <property type="project" value="TreeGrafter"/>
</dbReference>
<dbReference type="GO" id="GO:0046654">
    <property type="term" value="P:tetrahydrofolate biosynthetic process"/>
    <property type="evidence" value="ECO:0007669"/>
    <property type="project" value="UniProtKB-UniRule"/>
</dbReference>
<dbReference type="FunFam" id="3.30.1130.10:FF:000001">
    <property type="entry name" value="GTP cyclohydrolase 1"/>
    <property type="match status" value="1"/>
</dbReference>
<dbReference type="Gene3D" id="1.10.286.10">
    <property type="match status" value="1"/>
</dbReference>
<dbReference type="Gene3D" id="3.30.1130.10">
    <property type="match status" value="1"/>
</dbReference>
<dbReference type="HAMAP" id="MF_00223">
    <property type="entry name" value="FolE"/>
    <property type="match status" value="1"/>
</dbReference>
<dbReference type="InterPro" id="IPR043133">
    <property type="entry name" value="GTP-CH-I_C/QueF"/>
</dbReference>
<dbReference type="InterPro" id="IPR043134">
    <property type="entry name" value="GTP-CH-I_N"/>
</dbReference>
<dbReference type="InterPro" id="IPR001474">
    <property type="entry name" value="GTP_CycHdrlase_I"/>
</dbReference>
<dbReference type="InterPro" id="IPR018234">
    <property type="entry name" value="GTP_CycHdrlase_I_CS"/>
</dbReference>
<dbReference type="InterPro" id="IPR020602">
    <property type="entry name" value="GTP_CycHdrlase_I_dom"/>
</dbReference>
<dbReference type="NCBIfam" id="TIGR00063">
    <property type="entry name" value="folE"/>
    <property type="match status" value="1"/>
</dbReference>
<dbReference type="NCBIfam" id="NF006825">
    <property type="entry name" value="PRK09347.1-2"/>
    <property type="match status" value="1"/>
</dbReference>
<dbReference type="NCBIfam" id="NF006826">
    <property type="entry name" value="PRK09347.1-3"/>
    <property type="match status" value="1"/>
</dbReference>
<dbReference type="PANTHER" id="PTHR11109:SF7">
    <property type="entry name" value="GTP CYCLOHYDROLASE 1"/>
    <property type="match status" value="1"/>
</dbReference>
<dbReference type="PANTHER" id="PTHR11109">
    <property type="entry name" value="GTP CYCLOHYDROLASE I"/>
    <property type="match status" value="1"/>
</dbReference>
<dbReference type="Pfam" id="PF01227">
    <property type="entry name" value="GTP_cyclohydroI"/>
    <property type="match status" value="1"/>
</dbReference>
<dbReference type="SUPFAM" id="SSF55620">
    <property type="entry name" value="Tetrahydrobiopterin biosynthesis enzymes-like"/>
    <property type="match status" value="1"/>
</dbReference>
<dbReference type="PROSITE" id="PS00859">
    <property type="entry name" value="GTP_CYCLOHYDROL_1_1"/>
    <property type="match status" value="1"/>
</dbReference>
<sequence>MQESFENSVKNILKIIGEDPNREGLLKTPSRVYKAFKFLTSGYEEDPKEVLNDALFTSSNNEMVLMRNIEFYSLCEHHLLPIIGRVHVAYIPNGKVVGLSKIPRMVNIYARRLQIQEQMTEQIAQALAEVIEPKGVGVVVEARHMCVEMRGVQKINSTTTTSALRGCFIKNADTRREFFSLINSPQETHF</sequence>
<organism>
    <name type="scientific">Campylobacter curvus (strain 525.92)</name>
    <dbReference type="NCBI Taxonomy" id="360105"/>
    <lineage>
        <taxon>Bacteria</taxon>
        <taxon>Pseudomonadati</taxon>
        <taxon>Campylobacterota</taxon>
        <taxon>Epsilonproteobacteria</taxon>
        <taxon>Campylobacterales</taxon>
        <taxon>Campylobacteraceae</taxon>
        <taxon>Campylobacter</taxon>
    </lineage>
</organism>
<gene>
    <name evidence="2" type="primary">folE</name>
    <name type="ordered locus">Ccur92_01300</name>
    <name type="ORF">CCV52592_1496</name>
</gene>
<evidence type="ECO:0000250" key="1"/>
<evidence type="ECO:0000255" key="2">
    <source>
        <dbReference type="HAMAP-Rule" id="MF_00223"/>
    </source>
</evidence>
<comment type="catalytic activity">
    <reaction evidence="2">
        <text>GTP + H2O = 7,8-dihydroneopterin 3'-triphosphate + formate + H(+)</text>
        <dbReference type="Rhea" id="RHEA:17473"/>
        <dbReference type="ChEBI" id="CHEBI:15377"/>
        <dbReference type="ChEBI" id="CHEBI:15378"/>
        <dbReference type="ChEBI" id="CHEBI:15740"/>
        <dbReference type="ChEBI" id="CHEBI:37565"/>
        <dbReference type="ChEBI" id="CHEBI:58462"/>
        <dbReference type="EC" id="3.5.4.16"/>
    </reaction>
</comment>
<comment type="pathway">
    <text evidence="2">Cofactor biosynthesis; 7,8-dihydroneopterin triphosphate biosynthesis; 7,8-dihydroneopterin triphosphate from GTP: step 1/1.</text>
</comment>
<comment type="subunit">
    <text evidence="1">Toroid-shaped homodecamer, composed of two pentamers of five dimers.</text>
</comment>
<comment type="similarity">
    <text evidence="2">Belongs to the GTP cyclohydrolase I family.</text>
</comment>
<protein>
    <recommendedName>
        <fullName evidence="2">GTP cyclohydrolase 1</fullName>
        <ecNumber evidence="2">3.5.4.16</ecNumber>
    </recommendedName>
    <alternativeName>
        <fullName evidence="2">GTP cyclohydrolase I</fullName>
        <shortName evidence="2">GTP-CH-I</shortName>
    </alternativeName>
</protein>
<reference key="1">
    <citation type="submission" date="2007-07" db="EMBL/GenBank/DDBJ databases">
        <title>Genome sequence of Campylobacter curvus 525.92 isolated from human feces.</title>
        <authorList>
            <person name="Fouts D.E."/>
            <person name="Mongodin E.F."/>
            <person name="Puiu D."/>
            <person name="Sebastian Y."/>
            <person name="Miller W.G."/>
            <person name="Mandrell R.E."/>
            <person name="Lastovica A.J."/>
            <person name="Nelson K.E."/>
        </authorList>
    </citation>
    <scope>NUCLEOTIDE SEQUENCE [LARGE SCALE GENOMIC DNA]</scope>
    <source>
        <strain>525.92</strain>
    </source>
</reference>